<feature type="transit peptide" description="Mitochondrion" evidence="1">
    <location>
        <begin position="1"/>
        <end position="19"/>
    </location>
</feature>
<feature type="chain" id="PRO_0000020463" description="Pyruvate dehydrogenase E1 component subunit beta, mitochondrial">
    <location>
        <begin position="20"/>
        <end position="359"/>
    </location>
</feature>
<feature type="binding site" evidence="2">
    <location>
        <position position="82"/>
    </location>
    <ligand>
        <name>thiamine diphosphate</name>
        <dbReference type="ChEBI" id="CHEBI:58937"/>
        <note>ligand shared with alpha subunit</note>
    </ligand>
</feature>
<feature type="binding site" evidence="2">
    <location>
        <position position="135"/>
    </location>
    <ligand>
        <name>K(+)</name>
        <dbReference type="ChEBI" id="CHEBI:29103"/>
        <note>structural</note>
    </ligand>
</feature>
<feature type="binding site" evidence="2">
    <location>
        <position position="183"/>
    </location>
    <ligand>
        <name>K(+)</name>
        <dbReference type="ChEBI" id="CHEBI:29103"/>
        <note>structural</note>
    </ligand>
</feature>
<feature type="binding site" evidence="2">
    <location>
        <position position="184"/>
    </location>
    <ligand>
        <name>K(+)</name>
        <dbReference type="ChEBI" id="CHEBI:29103"/>
        <note>structural</note>
    </ligand>
</feature>
<feature type="binding site" evidence="2">
    <location>
        <position position="186"/>
    </location>
    <ligand>
        <name>K(+)</name>
        <dbReference type="ChEBI" id="CHEBI:29103"/>
        <note>structural</note>
    </ligand>
</feature>
<proteinExistence type="evidence at transcript level"/>
<reference key="1">
    <citation type="submission" date="1996-05" db="EMBL/GenBank/DDBJ databases">
        <authorList>
            <person name="Luethy M.H."/>
            <person name="Miernyk J.A."/>
            <person name="Randall D.D."/>
        </authorList>
    </citation>
    <scope>NUCLEOTIDE SEQUENCE [MRNA]</scope>
</reference>
<accession>P52904</accession>
<name>ODPB_PEA</name>
<organism>
    <name type="scientific">Pisum sativum</name>
    <name type="common">Garden pea</name>
    <name type="synonym">Lathyrus oleraceus</name>
    <dbReference type="NCBI Taxonomy" id="3888"/>
    <lineage>
        <taxon>Eukaryota</taxon>
        <taxon>Viridiplantae</taxon>
        <taxon>Streptophyta</taxon>
        <taxon>Embryophyta</taxon>
        <taxon>Tracheophyta</taxon>
        <taxon>Spermatophyta</taxon>
        <taxon>Magnoliopsida</taxon>
        <taxon>eudicotyledons</taxon>
        <taxon>Gunneridae</taxon>
        <taxon>Pentapetalae</taxon>
        <taxon>rosids</taxon>
        <taxon>fabids</taxon>
        <taxon>Fabales</taxon>
        <taxon>Fabaceae</taxon>
        <taxon>Papilionoideae</taxon>
        <taxon>50 kb inversion clade</taxon>
        <taxon>NPAAA clade</taxon>
        <taxon>Hologalegina</taxon>
        <taxon>IRL clade</taxon>
        <taxon>Fabeae</taxon>
        <taxon>Pisum</taxon>
    </lineage>
</organism>
<sequence>MLGVIRNKTIRPSFSAFRFFSSAKQMTVRDALNSALDVEMSADSKVFLMGEEVGEYQGAYKVTKGLLEKYGPERVLDTPITEAGFTGIGVGAAYYGLKPVVEFMTFNFSMQAIDHIINSAAKSNYMSAGQISVPIVFRGLNGDAAGVGAQHSHCYASWYGSCPGLKVLVPHSAEDARGLLKAAIRDPDPVVFLENELLYGESFPVSAEVLDSSFWLPIGKAKIEREGKDVTITAFSKMVGFALKAAEILEKEGISAEVINLRSIRPLDRPTINASVRKTNRLVTVEEGFPQHGVGAEICTSVIEESFGYLDATVERIGGADVPMPYAGNLERLVVPHVEDIVRAAKRACHRSVPLAAAA</sequence>
<protein>
    <recommendedName>
        <fullName>Pyruvate dehydrogenase E1 component subunit beta, mitochondrial</fullName>
        <shortName>PDHE1-B</shortName>
        <ecNumber>1.2.4.1</ecNumber>
    </recommendedName>
</protein>
<dbReference type="EC" id="1.2.4.1"/>
<dbReference type="EMBL" id="U56697">
    <property type="protein sequence ID" value="AAB01223.1"/>
    <property type="molecule type" value="mRNA"/>
</dbReference>
<dbReference type="PIR" id="T06532">
    <property type="entry name" value="T06532"/>
</dbReference>
<dbReference type="SMR" id="P52904"/>
<dbReference type="IntAct" id="P52904">
    <property type="interactions" value="1"/>
</dbReference>
<dbReference type="BindingDB" id="P52904"/>
<dbReference type="ChEMBL" id="CHEMBL2366570"/>
<dbReference type="ChEMBL" id="CHEMBL2366571"/>
<dbReference type="BRENDA" id="1.2.1.104">
    <property type="organism ID" value="4872"/>
</dbReference>
<dbReference type="SABIO-RK" id="P52904"/>
<dbReference type="GO" id="GO:0005759">
    <property type="term" value="C:mitochondrial matrix"/>
    <property type="evidence" value="ECO:0007669"/>
    <property type="project" value="UniProtKB-SubCell"/>
</dbReference>
<dbReference type="GO" id="GO:0046872">
    <property type="term" value="F:metal ion binding"/>
    <property type="evidence" value="ECO:0007669"/>
    <property type="project" value="UniProtKB-KW"/>
</dbReference>
<dbReference type="GO" id="GO:0004739">
    <property type="term" value="F:pyruvate dehydrogenase (acetyl-transferring) activity"/>
    <property type="evidence" value="ECO:0007669"/>
    <property type="project" value="UniProtKB-EC"/>
</dbReference>
<dbReference type="GO" id="GO:0006086">
    <property type="term" value="P:pyruvate decarboxylation to acetyl-CoA"/>
    <property type="evidence" value="ECO:0007669"/>
    <property type="project" value="InterPro"/>
</dbReference>
<dbReference type="CDD" id="cd07036">
    <property type="entry name" value="TPP_PYR_E1-PDHc-beta_like"/>
    <property type="match status" value="1"/>
</dbReference>
<dbReference type="FunFam" id="3.40.50.920:FF:000001">
    <property type="entry name" value="Pyruvate dehydrogenase E1 beta subunit"/>
    <property type="match status" value="1"/>
</dbReference>
<dbReference type="FunFam" id="3.40.50.970:FF:000006">
    <property type="entry name" value="Pyruvate dehydrogenase E1 component subunit beta"/>
    <property type="match status" value="1"/>
</dbReference>
<dbReference type="Gene3D" id="3.40.50.920">
    <property type="match status" value="1"/>
</dbReference>
<dbReference type="Gene3D" id="3.40.50.970">
    <property type="match status" value="1"/>
</dbReference>
<dbReference type="InterPro" id="IPR027110">
    <property type="entry name" value="PDHB_mito-type"/>
</dbReference>
<dbReference type="InterPro" id="IPR029061">
    <property type="entry name" value="THDP-binding"/>
</dbReference>
<dbReference type="InterPro" id="IPR009014">
    <property type="entry name" value="Transketo_C/PFOR_II"/>
</dbReference>
<dbReference type="InterPro" id="IPR005475">
    <property type="entry name" value="Transketolase-like_Pyr-bd"/>
</dbReference>
<dbReference type="InterPro" id="IPR033248">
    <property type="entry name" value="Transketolase_C"/>
</dbReference>
<dbReference type="NCBIfam" id="NF006667">
    <property type="entry name" value="PRK09212.1"/>
    <property type="match status" value="1"/>
</dbReference>
<dbReference type="NCBIfam" id="NF008854">
    <property type="entry name" value="PRK11892.1"/>
    <property type="match status" value="1"/>
</dbReference>
<dbReference type="PANTHER" id="PTHR11624">
    <property type="entry name" value="DEHYDROGENASE RELATED"/>
    <property type="match status" value="1"/>
</dbReference>
<dbReference type="PANTHER" id="PTHR11624:SF112">
    <property type="entry name" value="PYRUVATE DEHYDROGENASE E1 COMPONENT SUBUNIT BETA-1, MITOCHONDRIAL"/>
    <property type="match status" value="1"/>
</dbReference>
<dbReference type="Pfam" id="PF02779">
    <property type="entry name" value="Transket_pyr"/>
    <property type="match status" value="1"/>
</dbReference>
<dbReference type="Pfam" id="PF02780">
    <property type="entry name" value="Transketolase_C"/>
    <property type="match status" value="1"/>
</dbReference>
<dbReference type="SMART" id="SM00861">
    <property type="entry name" value="Transket_pyr"/>
    <property type="match status" value="1"/>
</dbReference>
<dbReference type="SUPFAM" id="SSF52518">
    <property type="entry name" value="Thiamin diphosphate-binding fold (THDP-binding)"/>
    <property type="match status" value="1"/>
</dbReference>
<dbReference type="SUPFAM" id="SSF52922">
    <property type="entry name" value="TK C-terminal domain-like"/>
    <property type="match status" value="1"/>
</dbReference>
<keyword id="KW-0479">Metal-binding</keyword>
<keyword id="KW-0496">Mitochondrion</keyword>
<keyword id="KW-0560">Oxidoreductase</keyword>
<keyword id="KW-0630">Potassium</keyword>
<keyword id="KW-0670">Pyruvate</keyword>
<keyword id="KW-0786">Thiamine pyrophosphate</keyword>
<keyword id="KW-0809">Transit peptide</keyword>
<comment type="function">
    <text>The pyruvate dehydrogenase complex catalyzes the overall conversion of pyruvate to acetyl-CoA and CO(2). It contains multiple copies of three enzymatic components: pyruvate dehydrogenase (E1), dihydrolipoamide acetyltransferase (E2) and lipoamide dehydrogenase (E3).</text>
</comment>
<comment type="catalytic activity">
    <reaction>
        <text>N(6)-[(R)-lipoyl]-L-lysyl-[protein] + pyruvate + H(+) = N(6)-[(R)-S(8)-acetyldihydrolipoyl]-L-lysyl-[protein] + CO2</text>
        <dbReference type="Rhea" id="RHEA:19189"/>
        <dbReference type="Rhea" id="RHEA-COMP:10474"/>
        <dbReference type="Rhea" id="RHEA-COMP:10478"/>
        <dbReference type="ChEBI" id="CHEBI:15361"/>
        <dbReference type="ChEBI" id="CHEBI:15378"/>
        <dbReference type="ChEBI" id="CHEBI:16526"/>
        <dbReference type="ChEBI" id="CHEBI:83099"/>
        <dbReference type="ChEBI" id="CHEBI:83111"/>
        <dbReference type="EC" id="1.2.4.1"/>
    </reaction>
</comment>
<comment type="cofactor">
    <cofactor evidence="2">
        <name>thiamine diphosphate</name>
        <dbReference type="ChEBI" id="CHEBI:58937"/>
    </cofactor>
</comment>
<comment type="subunit">
    <text evidence="1">Tetramer of 2 alpha and 2 beta subunits.</text>
</comment>
<comment type="subcellular location">
    <subcellularLocation>
        <location>Mitochondrion matrix</location>
    </subcellularLocation>
</comment>
<evidence type="ECO:0000250" key="1"/>
<evidence type="ECO:0000250" key="2">
    <source>
        <dbReference type="UniProtKB" id="P11177"/>
    </source>
</evidence>